<sequence>MDHKAYMYVLECRDGSYYIGYTTDMRRRLAIHNSGKGAKYTRARLPVKLIYAQGFASKEEAMSAEALLKRKKRPQKEEFLSENQDRNLLSYFEESWGVL</sequence>
<keyword id="KW-1185">Reference proteome</keyword>
<protein>
    <recommendedName>
        <fullName>UPF0213 protein SP_1535</fullName>
    </recommendedName>
</protein>
<accession>Q97PR7</accession>
<proteinExistence type="evidence at protein level"/>
<name>Y1535_STRPN</name>
<gene>
    <name type="ordered locus">SP_1535</name>
</gene>
<organism>
    <name type="scientific">Streptococcus pneumoniae serotype 4 (strain ATCC BAA-334 / TIGR4)</name>
    <dbReference type="NCBI Taxonomy" id="170187"/>
    <lineage>
        <taxon>Bacteria</taxon>
        <taxon>Bacillati</taxon>
        <taxon>Bacillota</taxon>
        <taxon>Bacilli</taxon>
        <taxon>Lactobacillales</taxon>
        <taxon>Streptococcaceae</taxon>
        <taxon>Streptococcus</taxon>
    </lineage>
</organism>
<feature type="chain" id="PRO_0000161392" description="UPF0213 protein SP_1535">
    <location>
        <begin position="1"/>
        <end position="99"/>
    </location>
</feature>
<feature type="domain" description="GIY-YIG" evidence="1">
    <location>
        <begin position="3"/>
        <end position="78"/>
    </location>
</feature>
<reference key="1">
    <citation type="journal article" date="2001" name="Science">
        <title>Complete genome sequence of a virulent isolate of Streptococcus pneumoniae.</title>
        <authorList>
            <person name="Tettelin H."/>
            <person name="Nelson K.E."/>
            <person name="Paulsen I.T."/>
            <person name="Eisen J.A."/>
            <person name="Read T.D."/>
            <person name="Peterson S.N."/>
            <person name="Heidelberg J.F."/>
            <person name="DeBoy R.T."/>
            <person name="Haft D.H."/>
            <person name="Dodson R.J."/>
            <person name="Durkin A.S."/>
            <person name="Gwinn M.L."/>
            <person name="Kolonay J.F."/>
            <person name="Nelson W.C."/>
            <person name="Peterson J.D."/>
            <person name="Umayam L.A."/>
            <person name="White O."/>
            <person name="Salzberg S.L."/>
            <person name="Lewis M.R."/>
            <person name="Radune D."/>
            <person name="Holtzapple E.K."/>
            <person name="Khouri H.M."/>
            <person name="Wolf A.M."/>
            <person name="Utterback T.R."/>
            <person name="Hansen C.L."/>
            <person name="McDonald L.A."/>
            <person name="Feldblyum T.V."/>
            <person name="Angiuoli S.V."/>
            <person name="Dickinson T."/>
            <person name="Hickey E.K."/>
            <person name="Holt I.E."/>
            <person name="Loftus B.J."/>
            <person name="Yang F."/>
            <person name="Smith H.O."/>
            <person name="Venter J.C."/>
            <person name="Dougherty B.A."/>
            <person name="Morrison D.A."/>
            <person name="Hollingshead S.K."/>
            <person name="Fraser C.M."/>
        </authorList>
    </citation>
    <scope>NUCLEOTIDE SEQUENCE [LARGE SCALE GENOMIC DNA]</scope>
    <source>
        <strain>ATCC BAA-334 / TIGR4</strain>
    </source>
</reference>
<dbReference type="EMBL" id="AE005672">
    <property type="protein sequence ID" value="AAK75623.1"/>
    <property type="molecule type" value="Genomic_DNA"/>
</dbReference>
<dbReference type="PIR" id="F95178">
    <property type="entry name" value="F95178"/>
</dbReference>
<dbReference type="RefSeq" id="WP_000349601.1">
    <property type="nucleotide sequence ID" value="NZ_CP155539.1"/>
</dbReference>
<dbReference type="SMR" id="Q97PR7"/>
<dbReference type="IntAct" id="Q97PR7">
    <property type="interactions" value="1"/>
</dbReference>
<dbReference type="PaxDb" id="170187-SP_1535"/>
<dbReference type="EnsemblBacteria" id="AAK75623">
    <property type="protein sequence ID" value="AAK75623"/>
    <property type="gene ID" value="SP_1535"/>
</dbReference>
<dbReference type="KEGG" id="spn:SP_1535"/>
<dbReference type="eggNOG" id="COG2827">
    <property type="taxonomic scope" value="Bacteria"/>
</dbReference>
<dbReference type="PhylomeDB" id="Q97PR7"/>
<dbReference type="BioCyc" id="SPNE170187:G1FZB-1553-MONOMER"/>
<dbReference type="Proteomes" id="UP000000585">
    <property type="component" value="Chromosome"/>
</dbReference>
<dbReference type="CDD" id="cd10456">
    <property type="entry name" value="GIY-YIG_UPF0213"/>
    <property type="match status" value="1"/>
</dbReference>
<dbReference type="Gene3D" id="3.40.1440.10">
    <property type="entry name" value="GIY-YIG endonuclease"/>
    <property type="match status" value="1"/>
</dbReference>
<dbReference type="InterPro" id="IPR000305">
    <property type="entry name" value="GIY-YIG_endonuc"/>
</dbReference>
<dbReference type="InterPro" id="IPR035901">
    <property type="entry name" value="GIY-YIG_endonuc_sf"/>
</dbReference>
<dbReference type="InterPro" id="IPR050190">
    <property type="entry name" value="UPF0213_domain"/>
</dbReference>
<dbReference type="PANTHER" id="PTHR34477">
    <property type="entry name" value="UPF0213 PROTEIN YHBQ"/>
    <property type="match status" value="1"/>
</dbReference>
<dbReference type="PANTHER" id="PTHR34477:SF1">
    <property type="entry name" value="UPF0213 PROTEIN YHBQ"/>
    <property type="match status" value="1"/>
</dbReference>
<dbReference type="Pfam" id="PF01541">
    <property type="entry name" value="GIY-YIG"/>
    <property type="match status" value="1"/>
</dbReference>
<dbReference type="SUPFAM" id="SSF82771">
    <property type="entry name" value="GIY-YIG endonuclease"/>
    <property type="match status" value="1"/>
</dbReference>
<dbReference type="PROSITE" id="PS50164">
    <property type="entry name" value="GIY_YIG"/>
    <property type="match status" value="1"/>
</dbReference>
<comment type="interaction">
    <interactant intactId="EBI-6474132">
        <id>Q97PR7</id>
    </interactant>
    <interactant intactId="EBI-6472858">
        <id>Q97PW7</id>
        <label>SP_1473</label>
    </interactant>
    <organismsDiffer>false</organismsDiffer>
    <experiments>2</experiments>
</comment>
<comment type="similarity">
    <text evidence="2">Belongs to the UPF0213 family.</text>
</comment>
<evidence type="ECO:0000255" key="1">
    <source>
        <dbReference type="PROSITE-ProRule" id="PRU00977"/>
    </source>
</evidence>
<evidence type="ECO:0000305" key="2"/>